<proteinExistence type="inferred from homology"/>
<gene>
    <name evidence="1" type="primary">ulaD</name>
    <name type="ordered locus">SDY_4365</name>
</gene>
<accession>Q328K1</accession>
<sequence length="216" mass="23506">MSLPMLQVALDNQTMDSAYETTRLIAEEVDIIEVGTILCVGEGVRAVRDLKALYPHKIVLADAKIADAGKILSRMCFEANADWVTVICCADINTAKGALDVAKEFNGDVQIELTGYWTWEQAQQWRDAGIGQVVYHRSRDAQAAGVAWGGADITAIKRLSDMGFKVTVTGGLALEDLPLFKGIPIHVFIAGRSIRDAASPVEAARQFKRSIAELWG</sequence>
<organism>
    <name type="scientific">Shigella dysenteriae serotype 1 (strain Sd197)</name>
    <dbReference type="NCBI Taxonomy" id="300267"/>
    <lineage>
        <taxon>Bacteria</taxon>
        <taxon>Pseudomonadati</taxon>
        <taxon>Pseudomonadota</taxon>
        <taxon>Gammaproteobacteria</taxon>
        <taxon>Enterobacterales</taxon>
        <taxon>Enterobacteriaceae</taxon>
        <taxon>Shigella</taxon>
    </lineage>
</organism>
<reference key="1">
    <citation type="journal article" date="2005" name="Nucleic Acids Res.">
        <title>Genome dynamics and diversity of Shigella species, the etiologic agents of bacillary dysentery.</title>
        <authorList>
            <person name="Yang F."/>
            <person name="Yang J."/>
            <person name="Zhang X."/>
            <person name="Chen L."/>
            <person name="Jiang Y."/>
            <person name="Yan Y."/>
            <person name="Tang X."/>
            <person name="Wang J."/>
            <person name="Xiong Z."/>
            <person name="Dong J."/>
            <person name="Xue Y."/>
            <person name="Zhu Y."/>
            <person name="Xu X."/>
            <person name="Sun L."/>
            <person name="Chen S."/>
            <person name="Nie H."/>
            <person name="Peng J."/>
            <person name="Xu J."/>
            <person name="Wang Y."/>
            <person name="Yuan Z."/>
            <person name="Wen Y."/>
            <person name="Yao Z."/>
            <person name="Shen Y."/>
            <person name="Qiang B."/>
            <person name="Hou Y."/>
            <person name="Yu J."/>
            <person name="Jin Q."/>
        </authorList>
    </citation>
    <scope>NUCLEOTIDE SEQUENCE [LARGE SCALE GENOMIC DNA]</scope>
    <source>
        <strain>Sd197</strain>
    </source>
</reference>
<feature type="chain" id="PRO_0000236096" description="3-keto-L-gulonate-6-phosphate decarboxylase UlaD">
    <location>
        <begin position="1"/>
        <end position="216"/>
    </location>
</feature>
<feature type="binding site" evidence="1">
    <location>
        <position position="11"/>
    </location>
    <ligand>
        <name>substrate</name>
    </ligand>
</feature>
<feature type="binding site" evidence="1">
    <location>
        <position position="33"/>
    </location>
    <ligand>
        <name>Mg(2+)</name>
        <dbReference type="ChEBI" id="CHEBI:18420"/>
    </ligand>
</feature>
<feature type="binding site" evidence="1">
    <location>
        <position position="62"/>
    </location>
    <ligand>
        <name>Mg(2+)</name>
        <dbReference type="ChEBI" id="CHEBI:18420"/>
    </ligand>
</feature>
<feature type="binding site" evidence="1">
    <location>
        <position position="192"/>
    </location>
    <ligand>
        <name>substrate</name>
    </ligand>
</feature>
<feature type="site" description="Transition state stabilizer" evidence="1">
    <location>
        <position position="64"/>
    </location>
</feature>
<feature type="site" description="Transition state stabilizer" evidence="1">
    <location>
        <position position="67"/>
    </location>
</feature>
<comment type="function">
    <text evidence="1">Catalyzes the decarboxylation of 3-keto-L-gulonate-6-P into L-xylulose-5-P. Is involved in the anaerobic L-ascorbate utilization.</text>
</comment>
<comment type="catalytic activity">
    <reaction evidence="1">
        <text>3-dehydro-L-gulonate 6-phosphate + H(+) = L-xylulose 5-phosphate + CO2</text>
        <dbReference type="Rhea" id="RHEA:14353"/>
        <dbReference type="ChEBI" id="CHEBI:15378"/>
        <dbReference type="ChEBI" id="CHEBI:16526"/>
        <dbReference type="ChEBI" id="CHEBI:57829"/>
        <dbReference type="ChEBI" id="CHEBI:58774"/>
        <dbReference type="EC" id="4.1.1.85"/>
    </reaction>
</comment>
<comment type="cofactor">
    <cofactor evidence="1">
        <name>Mg(2+)</name>
        <dbReference type="ChEBI" id="CHEBI:18420"/>
    </cofactor>
    <text evidence="1">Binds 1 Mg(2+) ion per subunit.</text>
</comment>
<comment type="pathway">
    <text evidence="1">Cofactor degradation; L-ascorbate degradation; D-xylulose 5-phosphate from L-ascorbate: step 2/4.</text>
</comment>
<comment type="subunit">
    <text evidence="1">Homodimer.</text>
</comment>
<comment type="induction">
    <text evidence="1">Induced by L-ascorbate. Repressed by UlaR.</text>
</comment>
<comment type="similarity">
    <text evidence="1">Belongs to the HPS/KGPDC family. KGPDC subfamily.</text>
</comment>
<dbReference type="EC" id="4.1.1.85" evidence="1"/>
<dbReference type="EMBL" id="CP000034">
    <property type="protein sequence ID" value="ABB64254.1"/>
    <property type="molecule type" value="Genomic_DNA"/>
</dbReference>
<dbReference type="RefSeq" id="WP_000056752.1">
    <property type="nucleotide sequence ID" value="NC_007606.1"/>
</dbReference>
<dbReference type="RefSeq" id="YP_405745.1">
    <property type="nucleotide sequence ID" value="NC_007606.1"/>
</dbReference>
<dbReference type="SMR" id="Q328K1"/>
<dbReference type="STRING" id="300267.SDY_4365"/>
<dbReference type="EnsemblBacteria" id="ABB64254">
    <property type="protein sequence ID" value="ABB64254"/>
    <property type="gene ID" value="SDY_4365"/>
</dbReference>
<dbReference type="KEGG" id="sdy:SDY_4365"/>
<dbReference type="PATRIC" id="fig|300267.13.peg.5153"/>
<dbReference type="HOGENOM" id="CLU_081825_0_0_6"/>
<dbReference type="UniPathway" id="UPA00263">
    <property type="reaction ID" value="UER00378"/>
</dbReference>
<dbReference type="Proteomes" id="UP000002716">
    <property type="component" value="Chromosome"/>
</dbReference>
<dbReference type="GO" id="GO:0033982">
    <property type="term" value="F:3-dehydro-L-gulonate-6-phosphate decarboxylase activity"/>
    <property type="evidence" value="ECO:0007669"/>
    <property type="project" value="UniProtKB-EC"/>
</dbReference>
<dbReference type="GO" id="GO:0000287">
    <property type="term" value="F:magnesium ion binding"/>
    <property type="evidence" value="ECO:0007669"/>
    <property type="project" value="UniProtKB-UniRule"/>
</dbReference>
<dbReference type="GO" id="GO:0004590">
    <property type="term" value="F:orotidine-5'-phosphate decarboxylase activity"/>
    <property type="evidence" value="ECO:0007669"/>
    <property type="project" value="InterPro"/>
</dbReference>
<dbReference type="GO" id="GO:0006207">
    <property type="term" value="P:'de novo' pyrimidine nucleobase biosynthetic process"/>
    <property type="evidence" value="ECO:0007669"/>
    <property type="project" value="InterPro"/>
</dbReference>
<dbReference type="GO" id="GO:0019854">
    <property type="term" value="P:L-ascorbic acid catabolic process"/>
    <property type="evidence" value="ECO:0007669"/>
    <property type="project" value="UniProtKB-UniRule"/>
</dbReference>
<dbReference type="CDD" id="cd04726">
    <property type="entry name" value="KGPDC_HPS"/>
    <property type="match status" value="1"/>
</dbReference>
<dbReference type="FunFam" id="3.20.20.70:FF:000022">
    <property type="entry name" value="3-keto-L-gulonate-6-phosphate decarboxylase UlaD"/>
    <property type="match status" value="1"/>
</dbReference>
<dbReference type="Gene3D" id="3.20.20.70">
    <property type="entry name" value="Aldolase class I"/>
    <property type="match status" value="1"/>
</dbReference>
<dbReference type="HAMAP" id="MF_01267">
    <property type="entry name" value="UlaD"/>
    <property type="match status" value="1"/>
</dbReference>
<dbReference type="InterPro" id="IPR023942">
    <property type="entry name" value="3-keto-L-gulonate6Pdecase_UlaD"/>
</dbReference>
<dbReference type="InterPro" id="IPR013785">
    <property type="entry name" value="Aldolase_TIM"/>
</dbReference>
<dbReference type="InterPro" id="IPR041710">
    <property type="entry name" value="HPS/KGPDC"/>
</dbReference>
<dbReference type="InterPro" id="IPR001754">
    <property type="entry name" value="OMPdeCOase_dom"/>
</dbReference>
<dbReference type="InterPro" id="IPR011060">
    <property type="entry name" value="RibuloseP-bd_barrel"/>
</dbReference>
<dbReference type="NCBIfam" id="NF009832">
    <property type="entry name" value="PRK13306.1"/>
    <property type="match status" value="1"/>
</dbReference>
<dbReference type="PANTHER" id="PTHR35039">
    <property type="entry name" value="3-KETO-L-GULONATE-6-PHOSPHATE DECARBOXYLASE SGBH-RELATED"/>
    <property type="match status" value="1"/>
</dbReference>
<dbReference type="PANTHER" id="PTHR35039:SF3">
    <property type="entry name" value="3-KETO-L-GULONATE-6-PHOSPHATE DECARBOXYLASE SGBH-RELATED"/>
    <property type="match status" value="1"/>
</dbReference>
<dbReference type="Pfam" id="PF00215">
    <property type="entry name" value="OMPdecase"/>
    <property type="match status" value="1"/>
</dbReference>
<dbReference type="SMART" id="SM00934">
    <property type="entry name" value="OMPdecase"/>
    <property type="match status" value="1"/>
</dbReference>
<dbReference type="SUPFAM" id="SSF51366">
    <property type="entry name" value="Ribulose-phoshate binding barrel"/>
    <property type="match status" value="1"/>
</dbReference>
<protein>
    <recommendedName>
        <fullName evidence="1">3-keto-L-gulonate-6-phosphate decarboxylase UlaD</fullName>
        <ecNumber evidence="1">4.1.1.85</ecNumber>
    </recommendedName>
    <alternativeName>
        <fullName evidence="1">3-dehydro-L-gulonate-6-phosphate decarboxylase</fullName>
    </alternativeName>
    <alternativeName>
        <fullName evidence="1">KGPDC</fullName>
    </alternativeName>
    <alternativeName>
        <fullName evidence="1">L-ascorbate utilization protein D</fullName>
    </alternativeName>
</protein>
<keyword id="KW-0119">Carbohydrate metabolism</keyword>
<keyword id="KW-0210">Decarboxylase</keyword>
<keyword id="KW-0456">Lyase</keyword>
<keyword id="KW-0460">Magnesium</keyword>
<keyword id="KW-0479">Metal-binding</keyword>
<keyword id="KW-1185">Reference proteome</keyword>
<name>ULAD_SHIDS</name>
<evidence type="ECO:0000255" key="1">
    <source>
        <dbReference type="HAMAP-Rule" id="MF_01267"/>
    </source>
</evidence>